<name>VATO_CAEEL</name>
<dbReference type="EMBL" id="AB000919">
    <property type="protein sequence ID" value="BAA22597.1"/>
    <property type="molecule type" value="mRNA"/>
</dbReference>
<dbReference type="EMBL" id="BX284602">
    <property type="protein sequence ID" value="CAA92686.1"/>
    <property type="molecule type" value="Genomic_DNA"/>
</dbReference>
<dbReference type="PIR" id="T37237">
    <property type="entry name" value="T37237"/>
</dbReference>
<dbReference type="RefSeq" id="NP_495659.1">
    <property type="nucleotide sequence ID" value="NM_063258.9"/>
</dbReference>
<dbReference type="SMR" id="G5EDB8"/>
<dbReference type="FunCoup" id="G5EDB8">
    <property type="interactions" value="2897"/>
</dbReference>
<dbReference type="IntAct" id="G5EDB8">
    <property type="interactions" value="1"/>
</dbReference>
<dbReference type="STRING" id="6239.T01H3.1.2"/>
<dbReference type="TCDB" id="3.A.2.2.7">
    <property type="family name" value="the h+- or na+-translocating f-type, v-type and a-type atpase (f-atpase) superfamily"/>
</dbReference>
<dbReference type="PaxDb" id="6239-T01H3.1.1"/>
<dbReference type="PeptideAtlas" id="G5EDB8"/>
<dbReference type="EnsemblMetazoa" id="T01H3.1.1">
    <property type="protein sequence ID" value="T01H3.1.1"/>
    <property type="gene ID" value="WBGene00006913"/>
</dbReference>
<dbReference type="GeneID" id="174272"/>
<dbReference type="KEGG" id="cel:CELE_T01H3.1"/>
<dbReference type="AGR" id="WB:WBGene00006913"/>
<dbReference type="CTD" id="174272"/>
<dbReference type="WormBase" id="T01H3.1">
    <property type="protein sequence ID" value="CE03595"/>
    <property type="gene ID" value="WBGene00006913"/>
    <property type="gene designation" value="vha-4"/>
</dbReference>
<dbReference type="eggNOG" id="KOG0233">
    <property type="taxonomic scope" value="Eukaryota"/>
</dbReference>
<dbReference type="GeneTree" id="ENSGT00550000075120"/>
<dbReference type="HOGENOM" id="CLU_085752_0_1_1"/>
<dbReference type="InParanoid" id="G5EDB8"/>
<dbReference type="OMA" id="TSPYMWG"/>
<dbReference type="OrthoDB" id="10264021at2759"/>
<dbReference type="PhylomeDB" id="G5EDB8"/>
<dbReference type="Reactome" id="R-CEL-1222556">
    <property type="pathway name" value="ROS and RNS production in phagocytes"/>
</dbReference>
<dbReference type="Reactome" id="R-CEL-77387">
    <property type="pathway name" value="Insulin receptor recycling"/>
</dbReference>
<dbReference type="Reactome" id="R-CEL-917977">
    <property type="pathway name" value="Transferrin endocytosis and recycling"/>
</dbReference>
<dbReference type="Reactome" id="R-CEL-9639288">
    <property type="pathway name" value="Amino acids regulate mTORC1"/>
</dbReference>
<dbReference type="Reactome" id="R-CEL-983712">
    <property type="pathway name" value="Ion channel transport"/>
</dbReference>
<dbReference type="PRO" id="PR:G5EDB8"/>
<dbReference type="Proteomes" id="UP000001940">
    <property type="component" value="Chromosome II"/>
</dbReference>
<dbReference type="Bgee" id="WBGene00006913">
    <property type="expression patterns" value="Expressed in larva and 4 other cell types or tissues"/>
</dbReference>
<dbReference type="GO" id="GO:0016020">
    <property type="term" value="C:membrane"/>
    <property type="evidence" value="ECO:0000318"/>
    <property type="project" value="GO_Central"/>
</dbReference>
<dbReference type="GO" id="GO:0033177">
    <property type="term" value="C:proton-transporting two-sector ATPase complex, proton-transporting domain"/>
    <property type="evidence" value="ECO:0007669"/>
    <property type="project" value="InterPro"/>
</dbReference>
<dbReference type="GO" id="GO:0015078">
    <property type="term" value="F:proton transmembrane transporter activity"/>
    <property type="evidence" value="ECO:0007669"/>
    <property type="project" value="InterPro"/>
</dbReference>
<dbReference type="GO" id="GO:0009792">
    <property type="term" value="P:embryo development ending in birth or egg hatching"/>
    <property type="evidence" value="ECO:0000315"/>
    <property type="project" value="WormBase"/>
</dbReference>
<dbReference type="CDD" id="cd18177">
    <property type="entry name" value="ATP-synt_Vo_c_ATP6F_rpt1"/>
    <property type="match status" value="1"/>
</dbReference>
<dbReference type="CDD" id="cd18178">
    <property type="entry name" value="ATP-synt_Vo_c_ATP6F_rpt2"/>
    <property type="match status" value="1"/>
</dbReference>
<dbReference type="FunFam" id="1.20.120.610:FF:000002">
    <property type="entry name" value="V-type proton ATPase proteolipid subunit"/>
    <property type="match status" value="1"/>
</dbReference>
<dbReference type="Gene3D" id="1.20.120.610">
    <property type="entry name" value="lithium bound rotor ring of v- atpase"/>
    <property type="match status" value="1"/>
</dbReference>
<dbReference type="InterPro" id="IPR002379">
    <property type="entry name" value="ATPase_proteolipid_c-like_dom"/>
</dbReference>
<dbReference type="InterPro" id="IPR035921">
    <property type="entry name" value="F/V-ATP_Csub_sf"/>
</dbReference>
<dbReference type="PANTHER" id="PTHR10263">
    <property type="entry name" value="V-TYPE PROTON ATPASE PROTEOLIPID SUBUNIT"/>
    <property type="match status" value="1"/>
</dbReference>
<dbReference type="Pfam" id="PF00137">
    <property type="entry name" value="ATP-synt_C"/>
    <property type="match status" value="2"/>
</dbReference>
<dbReference type="SUPFAM" id="SSF81333">
    <property type="entry name" value="F1F0 ATP synthase subunit C"/>
    <property type="match status" value="2"/>
</dbReference>
<accession>G5EDB8</accession>
<keyword id="KW-0375">Hydrogen ion transport</keyword>
<keyword id="KW-0406">Ion transport</keyword>
<keyword id="KW-0472">Membrane</keyword>
<keyword id="KW-1185">Reference proteome</keyword>
<keyword id="KW-0812">Transmembrane</keyword>
<keyword id="KW-1133">Transmembrane helix</keyword>
<keyword id="KW-0813">Transport</keyword>
<proteinExistence type="evidence at transcript level"/>
<sequence length="214" mass="22108">MAAGAILKTTATLTVITTLIILGTGLFYMLSGQGHRFDIGWFLTSTSPHMWAGLGIGFSLSLSVLGAGWGIFTTGSSILGGGVKAPRIRTKNLVSIIFCEAVAIFGIIMAFVFVGKLAEFRREDLPDTEDGMAILARNLASGYMIFGGGLTVGLSNLVCGLAVGIVGSGAAIADAANPALFVKILIIEIFASAIGLFGMIIGIVQTNKASFGNK</sequence>
<reference evidence="7" key="1">
    <citation type="journal article" date="1997" name="J. Biol. Chem.">
        <title>Three vha genes encode proteolipids of Caenorhabditis elegans vacuolar-type ATPase. Gene structures and preferential expression in an H-shaped excretory cell and rectal cells.</title>
        <authorList>
            <person name="Oka T."/>
            <person name="Yamamoto R."/>
            <person name="Futai M."/>
        </authorList>
    </citation>
    <scope>NUCLEOTIDE SEQUENCE [MRNA]</scope>
    <scope>TISSUE SPECIFICITY</scope>
</reference>
<reference evidence="8" key="2">
    <citation type="journal article" date="1998" name="Science">
        <title>Genome sequence of the nematode C. elegans: a platform for investigating biology.</title>
        <authorList>
            <consortium name="The C. elegans sequencing consortium"/>
        </authorList>
    </citation>
    <scope>NUCLEOTIDE SEQUENCE [LARGE SCALE GENOMIC DNA]</scope>
    <source>
        <strain evidence="8">Bristol N2</strain>
    </source>
</reference>
<reference evidence="6" key="3">
    <citation type="journal article" date="2006" name="J. Cell Biol.">
        <title>The V0-ATPase mediates apical secretion of exosomes containing Hedgehog-related proteins in Caenorhabditis elegans.</title>
        <authorList>
            <person name="Liegeois S."/>
            <person name="Benedetto A."/>
            <person name="Garnier J.M."/>
            <person name="Schwab Y."/>
            <person name="Labouesse M."/>
        </authorList>
    </citation>
    <scope>FUNCTION</scope>
    <scope>DISRUPTION PHENOTYPE</scope>
</reference>
<evidence type="ECO:0000250" key="1">
    <source>
        <dbReference type="UniProtKB" id="Q2TA24"/>
    </source>
</evidence>
<evidence type="ECO:0000255" key="2"/>
<evidence type="ECO:0000269" key="3">
    <source>
    </source>
</evidence>
<evidence type="ECO:0000269" key="4">
    <source>
    </source>
</evidence>
<evidence type="ECO:0000303" key="5">
    <source>
    </source>
</evidence>
<evidence type="ECO:0000305" key="6"/>
<evidence type="ECO:0000312" key="7">
    <source>
        <dbReference type="EMBL" id="BAA22597.1"/>
    </source>
</evidence>
<evidence type="ECO:0000312" key="8">
    <source>
        <dbReference type="Proteomes" id="UP000001940"/>
    </source>
</evidence>
<evidence type="ECO:0000312" key="9">
    <source>
        <dbReference type="WormBase" id="T01H3.1"/>
    </source>
</evidence>
<organism evidence="8">
    <name type="scientific">Caenorhabditis elegans</name>
    <dbReference type="NCBI Taxonomy" id="6239"/>
    <lineage>
        <taxon>Eukaryota</taxon>
        <taxon>Metazoa</taxon>
        <taxon>Ecdysozoa</taxon>
        <taxon>Nematoda</taxon>
        <taxon>Chromadorea</taxon>
        <taxon>Rhabditida</taxon>
        <taxon>Rhabditina</taxon>
        <taxon>Rhabditomorpha</taxon>
        <taxon>Rhabditoidea</taxon>
        <taxon>Rhabditidae</taxon>
        <taxon>Peloderinae</taxon>
        <taxon>Caenorhabditis</taxon>
    </lineage>
</organism>
<protein>
    <recommendedName>
        <fullName evidence="6">V-type proton ATPase 21 kDa proteolipid subunit c''</fullName>
        <shortName evidence="6">V-ATPase 21 kDa proteolipid subunit c''</shortName>
    </recommendedName>
</protein>
<feature type="chain" id="PRO_0000454080" description="V-type proton ATPase 21 kDa proteolipid subunit c''">
    <location>
        <begin position="1"/>
        <end position="214"/>
    </location>
</feature>
<feature type="topological domain" description="Lumenal" evidence="6">
    <location>
        <begin position="1"/>
        <end position="9"/>
    </location>
</feature>
<feature type="transmembrane region" description="Helical" evidence="2">
    <location>
        <begin position="10"/>
        <end position="30"/>
    </location>
</feature>
<feature type="topological domain" description="Cytoplasmic" evidence="6">
    <location>
        <begin position="31"/>
        <end position="51"/>
    </location>
</feature>
<feature type="transmembrane region" description="Helical" evidence="2">
    <location>
        <begin position="52"/>
        <end position="72"/>
    </location>
</feature>
<feature type="topological domain" description="Lumenal" evidence="6">
    <location>
        <begin position="73"/>
        <end position="93"/>
    </location>
</feature>
<feature type="transmembrane region" description="Helical" evidence="2">
    <location>
        <begin position="94"/>
        <end position="114"/>
    </location>
</feature>
<feature type="topological domain" description="Cytoplasmic" evidence="6">
    <location>
        <begin position="115"/>
        <end position="144"/>
    </location>
</feature>
<feature type="transmembrane region" description="Helical" evidence="2">
    <location>
        <begin position="145"/>
        <end position="165"/>
    </location>
</feature>
<feature type="topological domain" description="Lumenal" evidence="6">
    <location>
        <begin position="166"/>
        <end position="183"/>
    </location>
</feature>
<feature type="transmembrane region" description="Helical" evidence="2">
    <location>
        <begin position="184"/>
        <end position="204"/>
    </location>
</feature>
<feature type="topological domain" description="Cytoplasmic" evidence="6">
    <location>
        <begin position="205"/>
        <end position="214"/>
    </location>
</feature>
<feature type="site" description="Essential for proton translocation" evidence="1">
    <location>
        <position position="100"/>
    </location>
</feature>
<gene>
    <name evidence="5 9" type="primary">vha-4</name>
    <name evidence="9" type="ORF">T01H3.1</name>
</gene>
<comment type="function">
    <text evidence="1 3">Proton-conducting pore forming subunit of the V0 complex of vacuolar(H+)-ATPase (V-ATPase), a multisubunit enzyme composed of a peripheral complex (V1) that hydrolyzes ATP and a membrane integral complex (V0) that translocates protons (By similarity). V-ATPase is responsible for acidifying and maintaining the pH of intracellular compartments and in some cell types, is targeted to the plasma membrane, where it is responsible for acidifying the extracellular environment (By similarity). The V-ATPase is required for the function of the excretory canal (PubMed:16785323). Involved in receptor-mediated endocytosis (PubMed:16785323).</text>
</comment>
<comment type="subunit">
    <text evidence="1">V-ATPase is a heteromultimeric enzyme made up of two complexes: the ATP-hydrolytic V1 complex and the proton translocation V0 complex (By similarity). The V1 complex consists of three catalytic AB heterodimers that form a heterohexamer, three peripheral stalks each consisting of EG heterodimers, one central rotor including subunits D and F, and the regulatory subunits C and H (By similarity). The proton translocation complex V0 consists of the proton transport subunit a, a ring of proteolipid subunits c9c'', rotary subunit d, subunits e and f, and the accessory subunits vah-19/Ac45 and vah-20/PRR (By similarity).</text>
</comment>
<comment type="subcellular location">
    <subcellularLocation>
        <location evidence="2">Membrane</location>
        <topology evidence="2">Multi-pass membrane protein</topology>
    </subcellularLocation>
</comment>
<comment type="tissue specificity">
    <text evidence="4">Expressed in the H-shaped excretory cell, rectum, and a pair of cells posterior to the anus.</text>
</comment>
<comment type="disruption phenotype">
    <text evidence="3">RNAi-mediated knockdown causes embryonic lethality (PubMed:16785323). Causes defects in alae formation in the few surviving larvae and impairs yolk uptake by the oocytes from the pseudoceolomic cavities (PubMed:16785323). Causes an increase in the section of the excretory canal, which often has multiple lumens and abnormal whorls (PubMed:16785323).</text>
</comment>
<comment type="similarity">
    <text evidence="6">Belongs to the V-ATPase proteolipid subunit family.</text>
</comment>